<dbReference type="EC" id="3.6.5.2" evidence="2"/>
<dbReference type="EMBL" id="X51906">
    <property type="protein sequence ID" value="CAA36186.1"/>
    <property type="molecule type" value="Genomic_DNA"/>
</dbReference>
<dbReference type="EMBL" id="U19027">
    <property type="protein sequence ID" value="AAB67416.1"/>
    <property type="molecule type" value="Genomic_DNA"/>
</dbReference>
<dbReference type="EMBL" id="AY557933">
    <property type="protein sequence ID" value="AAS56259.1"/>
    <property type="molecule type" value="Genomic_DNA"/>
</dbReference>
<dbReference type="EMBL" id="BK006945">
    <property type="protein sequence ID" value="DAA09547.1"/>
    <property type="molecule type" value="Genomic_DNA"/>
</dbReference>
<dbReference type="PIR" id="S51452">
    <property type="entry name" value="S51452"/>
</dbReference>
<dbReference type="RefSeq" id="NP_013330.1">
    <property type="nucleotide sequence ID" value="NM_001182116.1"/>
</dbReference>
<dbReference type="SMR" id="P19073"/>
<dbReference type="BioGRID" id="31499">
    <property type="interactions" value="332"/>
</dbReference>
<dbReference type="DIP" id="DIP-862N"/>
<dbReference type="FunCoup" id="P19073">
    <property type="interactions" value="1222"/>
</dbReference>
<dbReference type="IntAct" id="P19073">
    <property type="interactions" value="23"/>
</dbReference>
<dbReference type="MINT" id="P19073"/>
<dbReference type="STRING" id="4932.YLR229C"/>
<dbReference type="iPTMnet" id="P19073"/>
<dbReference type="PaxDb" id="4932-YLR229C"/>
<dbReference type="PeptideAtlas" id="P19073"/>
<dbReference type="EnsemblFungi" id="YLR229C_mRNA">
    <property type="protein sequence ID" value="YLR229C"/>
    <property type="gene ID" value="YLR229C"/>
</dbReference>
<dbReference type="GeneID" id="850930"/>
<dbReference type="KEGG" id="sce:YLR229C"/>
<dbReference type="AGR" id="SGD:S000004219"/>
<dbReference type="SGD" id="S000004219">
    <property type="gene designation" value="CDC42"/>
</dbReference>
<dbReference type="VEuPathDB" id="FungiDB:YLR229C"/>
<dbReference type="eggNOG" id="KOG0393">
    <property type="taxonomic scope" value="Eukaryota"/>
</dbReference>
<dbReference type="GeneTree" id="ENSGT00940000153675"/>
<dbReference type="HOGENOM" id="CLU_041217_21_3_1"/>
<dbReference type="InParanoid" id="P19073"/>
<dbReference type="OMA" id="GDEPYTF"/>
<dbReference type="OrthoDB" id="8830751at2759"/>
<dbReference type="BioCyc" id="YEAST:G3O-32343-MONOMER"/>
<dbReference type="Reactome" id="R-SCE-2029482">
    <property type="pathway name" value="Regulation of actin dynamics for phagocytic cup formation"/>
</dbReference>
<dbReference type="Reactome" id="R-SCE-389359">
    <property type="pathway name" value="CD28 dependent Vav1 pathway"/>
</dbReference>
<dbReference type="Reactome" id="R-SCE-5626467">
    <property type="pathway name" value="RHO GTPases activate IQGAPs"/>
</dbReference>
<dbReference type="Reactome" id="R-SCE-5627123">
    <property type="pathway name" value="RHO GTPases activate PAKs"/>
</dbReference>
<dbReference type="Reactome" id="R-SCE-5687128">
    <property type="pathway name" value="MAPK6/MAPK4 signaling"/>
</dbReference>
<dbReference type="Reactome" id="R-SCE-9013148">
    <property type="pathway name" value="CDC42 GTPase cycle"/>
</dbReference>
<dbReference type="Reactome" id="R-SCE-9013406">
    <property type="pathway name" value="RHOQ GTPase cycle"/>
</dbReference>
<dbReference type="Reactome" id="R-SCE-9013409">
    <property type="pathway name" value="RHOJ GTPase cycle"/>
</dbReference>
<dbReference type="Reactome" id="R-SCE-9013420">
    <property type="pathway name" value="RHOU GTPase cycle"/>
</dbReference>
<dbReference type="Reactome" id="R-SCE-9013424">
    <property type="pathway name" value="RHOV GTPase cycle"/>
</dbReference>
<dbReference type="Reactome" id="R-SCE-983231">
    <property type="pathway name" value="Factors involved in megakaryocyte development and platelet production"/>
</dbReference>
<dbReference type="BioGRID-ORCS" id="850930">
    <property type="hits" value="4 hits in 10 CRISPR screens"/>
</dbReference>
<dbReference type="PRO" id="PR:P19073"/>
<dbReference type="Proteomes" id="UP000002311">
    <property type="component" value="Chromosome XII"/>
</dbReference>
<dbReference type="RNAct" id="P19073">
    <property type="molecule type" value="protein"/>
</dbReference>
<dbReference type="GO" id="GO:0071944">
    <property type="term" value="C:cell periphery"/>
    <property type="evidence" value="ECO:0007005"/>
    <property type="project" value="SGD"/>
</dbReference>
<dbReference type="GO" id="GO:0005935">
    <property type="term" value="C:cellular bud neck"/>
    <property type="evidence" value="ECO:0000314"/>
    <property type="project" value="SGD"/>
</dbReference>
<dbReference type="GO" id="GO:0005934">
    <property type="term" value="C:cellular bud tip"/>
    <property type="evidence" value="ECO:0000314"/>
    <property type="project" value="SGD"/>
</dbReference>
<dbReference type="GO" id="GO:0000329">
    <property type="term" value="C:fungal-type vacuole membrane"/>
    <property type="evidence" value="ECO:0000314"/>
    <property type="project" value="SGD"/>
</dbReference>
<dbReference type="GO" id="GO:0000131">
    <property type="term" value="C:incipient cellular bud site"/>
    <property type="evidence" value="ECO:0000314"/>
    <property type="project" value="SGD"/>
</dbReference>
<dbReference type="GO" id="GO:0043332">
    <property type="term" value="C:mating projection tip"/>
    <property type="evidence" value="ECO:0000314"/>
    <property type="project" value="SGD"/>
</dbReference>
<dbReference type="GO" id="GO:0005635">
    <property type="term" value="C:nuclear envelope"/>
    <property type="evidence" value="ECO:0000314"/>
    <property type="project" value="SGD"/>
</dbReference>
<dbReference type="GO" id="GO:0031965">
    <property type="term" value="C:nuclear membrane"/>
    <property type="evidence" value="ECO:0000314"/>
    <property type="project" value="SGD"/>
</dbReference>
<dbReference type="GO" id="GO:0005886">
    <property type="term" value="C:plasma membrane"/>
    <property type="evidence" value="ECO:0000314"/>
    <property type="project" value="SGD"/>
</dbReference>
<dbReference type="GO" id="GO:0005940">
    <property type="term" value="C:septin ring"/>
    <property type="evidence" value="ECO:0000314"/>
    <property type="project" value="SGD"/>
</dbReference>
<dbReference type="GO" id="GO:0005525">
    <property type="term" value="F:GTP binding"/>
    <property type="evidence" value="ECO:0000318"/>
    <property type="project" value="GO_Central"/>
</dbReference>
<dbReference type="GO" id="GO:0003924">
    <property type="term" value="F:GTPase activity"/>
    <property type="evidence" value="ECO:0000314"/>
    <property type="project" value="SGD"/>
</dbReference>
<dbReference type="GO" id="GO:0019901">
    <property type="term" value="F:protein kinase binding"/>
    <property type="evidence" value="ECO:0000318"/>
    <property type="project" value="GO_Central"/>
</dbReference>
<dbReference type="GO" id="GO:0007015">
    <property type="term" value="P:actin filament organization"/>
    <property type="evidence" value="ECO:0000318"/>
    <property type="project" value="GO_Central"/>
</dbReference>
<dbReference type="GO" id="GO:0007118">
    <property type="term" value="P:budding cell apical bud growth"/>
    <property type="evidence" value="ECO:0000315"/>
    <property type="project" value="SGD"/>
</dbReference>
<dbReference type="GO" id="GO:0007119">
    <property type="term" value="P:budding cell isotropic bud growth"/>
    <property type="evidence" value="ECO:0000315"/>
    <property type="project" value="SGD"/>
</dbReference>
<dbReference type="GO" id="GO:0000747">
    <property type="term" value="P:conjugation with cellular fusion"/>
    <property type="evidence" value="ECO:0000315"/>
    <property type="project" value="SGD"/>
</dbReference>
<dbReference type="GO" id="GO:0006897">
    <property type="term" value="P:endocytosis"/>
    <property type="evidence" value="ECO:0000318"/>
    <property type="project" value="GO_Central"/>
</dbReference>
<dbReference type="GO" id="GO:0030010">
    <property type="term" value="P:establishment of cell polarity"/>
    <property type="evidence" value="ECO:0000315"/>
    <property type="project" value="SGD"/>
</dbReference>
<dbReference type="GO" id="GO:0001403">
    <property type="term" value="P:invasive growth in response to glucose limitation"/>
    <property type="evidence" value="ECO:0000315"/>
    <property type="project" value="SGD"/>
</dbReference>
<dbReference type="GO" id="GO:0071763">
    <property type="term" value="P:nuclear membrane organization"/>
    <property type="evidence" value="ECO:0000314"/>
    <property type="project" value="SGD"/>
</dbReference>
<dbReference type="GO" id="GO:0000750">
    <property type="term" value="P:pheromone-dependent signal transduction involved in conjugation with cellular fusion"/>
    <property type="evidence" value="ECO:0000315"/>
    <property type="project" value="SGD"/>
</dbReference>
<dbReference type="GO" id="GO:0045921">
    <property type="term" value="P:positive regulation of exocytosis"/>
    <property type="evidence" value="ECO:0000315"/>
    <property type="project" value="SGD"/>
</dbReference>
<dbReference type="GO" id="GO:2000222">
    <property type="term" value="P:positive regulation of pseudohyphal growth"/>
    <property type="evidence" value="ECO:0000315"/>
    <property type="project" value="SGD"/>
</dbReference>
<dbReference type="GO" id="GO:0022604">
    <property type="term" value="P:regulation of cell morphogenesis"/>
    <property type="evidence" value="ECO:0000315"/>
    <property type="project" value="AgBase"/>
</dbReference>
<dbReference type="GO" id="GO:0007096">
    <property type="term" value="P:regulation of exit from mitosis"/>
    <property type="evidence" value="ECO:0000315"/>
    <property type="project" value="SGD"/>
</dbReference>
<dbReference type="GO" id="GO:0060178">
    <property type="term" value="P:regulation of exocyst localization"/>
    <property type="evidence" value="ECO:0000315"/>
    <property type="project" value="SGD"/>
</dbReference>
<dbReference type="GO" id="GO:0032889">
    <property type="term" value="P:regulation of vacuole fusion, non-autophagic"/>
    <property type="evidence" value="ECO:0000315"/>
    <property type="project" value="SGD"/>
</dbReference>
<dbReference type="GO" id="GO:0007266">
    <property type="term" value="P:Rho protein signal transduction"/>
    <property type="evidence" value="ECO:0000315"/>
    <property type="project" value="SGD"/>
</dbReference>
<dbReference type="GO" id="GO:0031106">
    <property type="term" value="P:septin ring organization"/>
    <property type="evidence" value="ECO:0000315"/>
    <property type="project" value="SGD"/>
</dbReference>
<dbReference type="GO" id="GO:0007165">
    <property type="term" value="P:signal transduction"/>
    <property type="evidence" value="ECO:0000318"/>
    <property type="project" value="GO_Central"/>
</dbReference>
<dbReference type="CDD" id="cd01874">
    <property type="entry name" value="Cdc42"/>
    <property type="match status" value="1"/>
</dbReference>
<dbReference type="FunFam" id="3.40.50.300:FF:000236">
    <property type="entry name" value="Cell division control protein 42"/>
    <property type="match status" value="1"/>
</dbReference>
<dbReference type="Gene3D" id="3.40.50.300">
    <property type="entry name" value="P-loop containing nucleotide triphosphate hydrolases"/>
    <property type="match status" value="1"/>
</dbReference>
<dbReference type="InterPro" id="IPR037874">
    <property type="entry name" value="Cdc42"/>
</dbReference>
<dbReference type="InterPro" id="IPR027417">
    <property type="entry name" value="P-loop_NTPase"/>
</dbReference>
<dbReference type="InterPro" id="IPR005225">
    <property type="entry name" value="Small_GTP-bd"/>
</dbReference>
<dbReference type="InterPro" id="IPR001806">
    <property type="entry name" value="Small_GTPase"/>
</dbReference>
<dbReference type="InterPro" id="IPR003578">
    <property type="entry name" value="Small_GTPase_Rho"/>
</dbReference>
<dbReference type="NCBIfam" id="TIGR00231">
    <property type="entry name" value="small_GTP"/>
    <property type="match status" value="1"/>
</dbReference>
<dbReference type="PANTHER" id="PTHR24072">
    <property type="entry name" value="RHO FAMILY GTPASE"/>
    <property type="match status" value="1"/>
</dbReference>
<dbReference type="Pfam" id="PF00071">
    <property type="entry name" value="Ras"/>
    <property type="match status" value="1"/>
</dbReference>
<dbReference type="PRINTS" id="PR00449">
    <property type="entry name" value="RASTRNSFRMNG"/>
</dbReference>
<dbReference type="SMART" id="SM00175">
    <property type="entry name" value="RAB"/>
    <property type="match status" value="1"/>
</dbReference>
<dbReference type="SMART" id="SM00173">
    <property type="entry name" value="RAS"/>
    <property type="match status" value="1"/>
</dbReference>
<dbReference type="SMART" id="SM00174">
    <property type="entry name" value="RHO"/>
    <property type="match status" value="1"/>
</dbReference>
<dbReference type="SUPFAM" id="SSF52540">
    <property type="entry name" value="P-loop containing nucleoside triphosphate hydrolases"/>
    <property type="match status" value="1"/>
</dbReference>
<dbReference type="PROSITE" id="PS51420">
    <property type="entry name" value="RHO"/>
    <property type="match status" value="1"/>
</dbReference>
<accession>P19073</accession>
<accession>D6VYN1</accession>
<accession>Q05978</accession>
<organism>
    <name type="scientific">Saccharomyces cerevisiae (strain ATCC 204508 / S288c)</name>
    <name type="common">Baker's yeast</name>
    <dbReference type="NCBI Taxonomy" id="559292"/>
    <lineage>
        <taxon>Eukaryota</taxon>
        <taxon>Fungi</taxon>
        <taxon>Dikarya</taxon>
        <taxon>Ascomycota</taxon>
        <taxon>Saccharomycotina</taxon>
        <taxon>Saccharomycetes</taxon>
        <taxon>Saccharomycetales</taxon>
        <taxon>Saccharomycetaceae</taxon>
        <taxon>Saccharomyces</taxon>
    </lineage>
</organism>
<gene>
    <name type="primary">CDC42</name>
    <name type="synonym">SRO2</name>
    <name type="ordered locus">YLR229C</name>
    <name type="ORF">L8083.13</name>
</gene>
<name>CDC42_YEAST</name>
<reference key="1">
    <citation type="journal article" date="1990" name="J. Cell Biol.">
        <title>Molecular characterization of CDC42, a Saccharomyces cerevisiae gene involved in the development of cell polarity.</title>
        <authorList>
            <person name="Johnson D.I."/>
            <person name="Pringle J.R."/>
        </authorList>
    </citation>
    <scope>NUCLEOTIDE SEQUENCE [GENOMIC DNA]</scope>
</reference>
<reference key="2">
    <citation type="journal article" date="1997" name="Nature">
        <title>The nucleotide sequence of Saccharomyces cerevisiae chromosome XII.</title>
        <authorList>
            <person name="Johnston M."/>
            <person name="Hillier L.W."/>
            <person name="Riles L."/>
            <person name="Albermann K."/>
            <person name="Andre B."/>
            <person name="Ansorge W."/>
            <person name="Benes V."/>
            <person name="Brueckner M."/>
            <person name="Delius H."/>
            <person name="Dubois E."/>
            <person name="Duesterhoeft A."/>
            <person name="Entian K.-D."/>
            <person name="Floeth M."/>
            <person name="Goffeau A."/>
            <person name="Hebling U."/>
            <person name="Heumann K."/>
            <person name="Heuss-Neitzel D."/>
            <person name="Hilbert H."/>
            <person name="Hilger F."/>
            <person name="Kleine K."/>
            <person name="Koetter P."/>
            <person name="Louis E.J."/>
            <person name="Messenguy F."/>
            <person name="Mewes H.-W."/>
            <person name="Miosga T."/>
            <person name="Moestl D."/>
            <person name="Mueller-Auer S."/>
            <person name="Nentwich U."/>
            <person name="Obermaier B."/>
            <person name="Piravandi E."/>
            <person name="Pohl T.M."/>
            <person name="Portetelle D."/>
            <person name="Purnelle B."/>
            <person name="Rechmann S."/>
            <person name="Rieger M."/>
            <person name="Rinke M."/>
            <person name="Rose M."/>
            <person name="Scharfe M."/>
            <person name="Scherens B."/>
            <person name="Scholler P."/>
            <person name="Schwager C."/>
            <person name="Schwarz S."/>
            <person name="Underwood A.P."/>
            <person name="Urrestarazu L.A."/>
            <person name="Vandenbol M."/>
            <person name="Verhasselt P."/>
            <person name="Vierendeels F."/>
            <person name="Voet M."/>
            <person name="Volckaert G."/>
            <person name="Voss H."/>
            <person name="Wambutt R."/>
            <person name="Wedler E."/>
            <person name="Wedler H."/>
            <person name="Zimmermann F.K."/>
            <person name="Zollner A."/>
            <person name="Hani J."/>
            <person name="Hoheisel J.D."/>
        </authorList>
    </citation>
    <scope>NUCLEOTIDE SEQUENCE [LARGE SCALE GENOMIC DNA]</scope>
    <source>
        <strain>ATCC 204508 / S288c</strain>
    </source>
</reference>
<reference key="3">
    <citation type="journal article" date="2014" name="G3 (Bethesda)">
        <title>The reference genome sequence of Saccharomyces cerevisiae: Then and now.</title>
        <authorList>
            <person name="Engel S.R."/>
            <person name="Dietrich F.S."/>
            <person name="Fisk D.G."/>
            <person name="Binkley G."/>
            <person name="Balakrishnan R."/>
            <person name="Costanzo M.C."/>
            <person name="Dwight S.S."/>
            <person name="Hitz B.C."/>
            <person name="Karra K."/>
            <person name="Nash R.S."/>
            <person name="Weng S."/>
            <person name="Wong E.D."/>
            <person name="Lloyd P."/>
            <person name="Skrzypek M.S."/>
            <person name="Miyasato S.R."/>
            <person name="Simison M."/>
            <person name="Cherry J.M."/>
        </authorList>
    </citation>
    <scope>GENOME REANNOTATION</scope>
    <source>
        <strain>ATCC 204508 / S288c</strain>
    </source>
</reference>
<reference key="4">
    <citation type="journal article" date="2007" name="Genome Res.">
        <title>Approaching a complete repository of sequence-verified protein-encoding clones for Saccharomyces cerevisiae.</title>
        <authorList>
            <person name="Hu Y."/>
            <person name="Rolfs A."/>
            <person name="Bhullar B."/>
            <person name="Murthy T.V.S."/>
            <person name="Zhu C."/>
            <person name="Berger M.F."/>
            <person name="Camargo A.A."/>
            <person name="Kelley F."/>
            <person name="McCarron S."/>
            <person name="Jepson D."/>
            <person name="Richardson A."/>
            <person name="Raphael J."/>
            <person name="Moreira D."/>
            <person name="Taycher E."/>
            <person name="Zuo D."/>
            <person name="Mohr S."/>
            <person name="Kane M.F."/>
            <person name="Williamson J."/>
            <person name="Simpson A.J.G."/>
            <person name="Bulyk M.L."/>
            <person name="Harlow E."/>
            <person name="Marsischky G."/>
            <person name="Kolodner R.D."/>
            <person name="LaBaer J."/>
        </authorList>
    </citation>
    <scope>NUCLEOTIDE SEQUENCE [GENOMIC DNA]</scope>
    <source>
        <strain>ATCC 204508 / S288c</strain>
    </source>
</reference>
<reference key="5">
    <citation type="journal article" date="1996" name="Mol. Cell. Biol.">
        <title>Identification of the bud emergence gene BEM4 and its interactions with rho-type GTPases in Saccharomyces cerevisiae.</title>
        <authorList>
            <person name="Mack D."/>
            <person name="Nishimura K."/>
            <person name="Dennehey B.K."/>
            <person name="Arbogast T."/>
            <person name="Parkinson J."/>
            <person name="Toh-e A."/>
            <person name="Pringle J.R."/>
            <person name="Bender A."/>
            <person name="Matsui Y."/>
        </authorList>
    </citation>
    <scope>INTERACTION WITH BEM4</scope>
</reference>
<reference key="6">
    <citation type="journal article" date="1997" name="Yeast">
        <title>Characterization of the Saccharomyces cerevisiae cdc42-1ts allele and new temperature-conditional-lethal cdc42 alleles.</title>
        <authorList>
            <person name="Miller P.J."/>
            <person name="Johnson D.I."/>
        </authorList>
    </citation>
    <scope>MUTAGENESIS</scope>
</reference>
<reference key="7">
    <citation type="journal article" date="1995" name="Genes Dev.">
        <title>Mutation of RGA1, which encodes a putative GTPase-activating protein for the polarity-establishment protein Cdc42p, activates the pheromone-response pathway in the yeast Saccharomyces cerevisiae.</title>
        <authorList>
            <person name="Stevenson B.J."/>
            <person name="Ferguson B."/>
            <person name="de Virgilio C."/>
            <person name="Bi E."/>
            <person name="Pringle J.R."/>
            <person name="Ammerer G."/>
            <person name="Sprague G.F. Jr."/>
        </authorList>
    </citation>
    <scope>INTERACTION WITH RGA1</scope>
</reference>
<reference key="8">
    <citation type="journal article" date="2007" name="Mol. Biol. Cell">
        <title>Sequential and distinct roles of the cadherin domain-containing protein Axl2p in cell polarization in yeast cell cycle.</title>
        <authorList>
            <person name="Gao X.D."/>
            <person name="Sperber L.M."/>
            <person name="Kane S.A."/>
            <person name="Tong Z."/>
            <person name="Tong A.H."/>
            <person name="Boone C."/>
            <person name="Bi E."/>
        </authorList>
    </citation>
    <scope>FUNCTION</scope>
    <scope>INTERACTION WITH AXL2</scope>
</reference>
<sequence length="191" mass="21323">MQTLKCVVVGDGAVGKTCLLISYTTNQFPADYVPTVFDNYAVTVMIGDEPYTLGLFDTAGQEDYDRLRPLSYPSTDVFLVCFSVISPPSFENVKEKWFPEVHHHCPGVPCLVVGTQIDLRDDKVIIEKLQRQRLRPITSEQGSRLARELKAVKYVECSALTQRGLKNVFDEAIVAALEPPVIKKSKKCAIL</sequence>
<comment type="function">
    <text evidence="6">Involved in development of cell polarity during the cell division cycle, and essential for bud emergence. Affects signaling in the pheromone-response pathway through the STE20 protein kinase. Negatively regulated by the GTPase-activating proteins RGA1, BEM3, and BEM4.</text>
</comment>
<comment type="catalytic activity">
    <reaction evidence="2">
        <text>GTP + H2O = GDP + phosphate + H(+)</text>
        <dbReference type="Rhea" id="RHEA:19669"/>
        <dbReference type="ChEBI" id="CHEBI:15377"/>
        <dbReference type="ChEBI" id="CHEBI:15378"/>
        <dbReference type="ChEBI" id="CHEBI:37565"/>
        <dbReference type="ChEBI" id="CHEBI:43474"/>
        <dbReference type="ChEBI" id="CHEBI:58189"/>
        <dbReference type="EC" id="3.6.5.2"/>
    </reaction>
    <physiologicalReaction direction="left-to-right" evidence="2">
        <dbReference type="Rhea" id="RHEA:19670"/>
    </physiologicalReaction>
</comment>
<comment type="subunit">
    <text evidence="6 7 8">Interacts with BEM4; the interaction is direct (PubMed:8754839). Interacts with AXL2 (PubMed:17460121). Interacts with RGA1 (PubMed:7498791).</text>
</comment>
<comment type="interaction">
    <interactant intactId="EBI-4274">
        <id>P19073</id>
    </interactant>
    <interactant intactId="EBI-29423">
        <id>Q99299</id>
        <label>AIM44</label>
    </interactant>
    <organismsDiffer>false</organismsDiffer>
    <experiments>4</experiments>
</comment>
<comment type="interaction">
    <interactant intactId="EBI-4274">
        <id>P19073</id>
    </interactant>
    <interactant intactId="EBI-3508">
        <id>P29366</id>
        <label>BEM1</label>
    </interactant>
    <organismsDiffer>false</organismsDiffer>
    <experiments>4</experiments>
</comment>
<comment type="interaction">
    <interactant intactId="EBI-4274">
        <id>P19073</id>
    </interactant>
    <interactant intactId="EBI-4220">
        <id>P11433</id>
        <label>CDC24</label>
    </interactant>
    <organismsDiffer>false</organismsDiffer>
    <experiments>4</experiments>
</comment>
<comment type="interaction">
    <interactant intactId="EBI-4274">
        <id>P19073</id>
    </interactant>
    <interactant intactId="EBI-7525">
        <id>Q12434</id>
        <label>RDI1</label>
    </interactant>
    <organismsDiffer>false</organismsDiffer>
    <experiments>3</experiments>
</comment>
<comment type="interaction">
    <interactant intactId="EBI-4274">
        <id>P19073</id>
    </interactant>
    <interactant intactId="EBI-18285">
        <id>Q03497</id>
        <label>STE20</label>
    </interactant>
    <organismsDiffer>false</organismsDiffer>
    <experiments>6</experiments>
</comment>
<comment type="subcellular location">
    <subcellularLocation>
        <location evidence="10">Cell membrane</location>
        <topology evidence="10">Lipid-anchor</topology>
        <orientation evidence="10">Cytoplasmic side</orientation>
    </subcellularLocation>
</comment>
<comment type="similarity">
    <text evidence="10">Belongs to the small GTPase superfamily. Rho family. CDC42 subfamily.</text>
</comment>
<evidence type="ECO:0000250" key="1"/>
<evidence type="ECO:0000250" key="2">
    <source>
        <dbReference type="UniProtKB" id="P60953"/>
    </source>
</evidence>
<evidence type="ECO:0000250" key="3">
    <source>
        <dbReference type="UniProtKB" id="P61586"/>
    </source>
</evidence>
<evidence type="ECO:0000250" key="4">
    <source>
        <dbReference type="UniProtKB" id="P62745"/>
    </source>
</evidence>
<evidence type="ECO:0000255" key="5"/>
<evidence type="ECO:0000269" key="6">
    <source>
    </source>
</evidence>
<evidence type="ECO:0000269" key="7">
    <source>
    </source>
</evidence>
<evidence type="ECO:0000269" key="8">
    <source>
    </source>
</evidence>
<evidence type="ECO:0000269" key="9">
    <source>
    </source>
</evidence>
<evidence type="ECO:0000305" key="10"/>
<keyword id="KW-0131">Cell cycle</keyword>
<keyword id="KW-0132">Cell division</keyword>
<keyword id="KW-1003">Cell membrane</keyword>
<keyword id="KW-0342">GTP-binding</keyword>
<keyword id="KW-0378">Hydrolase</keyword>
<keyword id="KW-0449">Lipoprotein</keyword>
<keyword id="KW-0472">Membrane</keyword>
<keyword id="KW-0488">Methylation</keyword>
<keyword id="KW-0547">Nucleotide-binding</keyword>
<keyword id="KW-0589">Pheromone response</keyword>
<keyword id="KW-0636">Prenylation</keyword>
<keyword id="KW-1185">Reference proteome</keyword>
<proteinExistence type="evidence at protein level"/>
<protein>
    <recommendedName>
        <fullName>Cell division control protein 42</fullName>
        <ecNumber evidence="2">3.6.5.2</ecNumber>
    </recommendedName>
    <alternativeName>
        <fullName>Suppressor of RHO3 protein 2</fullName>
    </alternativeName>
</protein>
<feature type="chain" id="PRO_0000198955" description="Cell division control protein 42">
    <location>
        <begin position="1"/>
        <end position="188"/>
    </location>
</feature>
<feature type="propeptide" id="PRO_0000281285" description="Removed in mature form" evidence="1">
    <location>
        <begin position="189"/>
        <end position="191"/>
    </location>
</feature>
<feature type="short sequence motif" description="Effector region" evidence="5">
    <location>
        <begin position="32"/>
        <end position="40"/>
    </location>
</feature>
<feature type="binding site" evidence="3">
    <location>
        <begin position="10"/>
        <end position="17"/>
    </location>
    <ligand>
        <name>GTP</name>
        <dbReference type="ChEBI" id="CHEBI:37565"/>
    </ligand>
</feature>
<feature type="binding site" evidence="1">
    <location>
        <begin position="57"/>
        <end position="61"/>
    </location>
    <ligand>
        <name>GTP</name>
        <dbReference type="ChEBI" id="CHEBI:37565"/>
    </ligand>
</feature>
<feature type="binding site" evidence="3">
    <location>
        <begin position="115"/>
        <end position="118"/>
    </location>
    <ligand>
        <name>GTP</name>
        <dbReference type="ChEBI" id="CHEBI:37565"/>
    </ligand>
</feature>
<feature type="modified residue" description="Cysteine methyl ester" evidence="4">
    <location>
        <position position="188"/>
    </location>
</feature>
<feature type="lipid moiety-binding region" description="S-geranylgeranyl cysteine" evidence="4">
    <location>
        <position position="188"/>
    </location>
</feature>
<feature type="mutagenesis site" description="Enhances interaction with RGA1." evidence="9">
    <original>G</original>
    <variation>V</variation>
    <location>
        <position position="12"/>
    </location>
</feature>
<feature type="mutagenesis site" description="Temperature-sensitive mutant." evidence="9">
    <original>T</original>
    <variation>A</variation>
    <location>
        <position position="58"/>
    </location>
</feature>
<feature type="mutagenesis site" description="Enhances interaction with RGA1." evidence="9">
    <original>Q</original>
    <variation>L</variation>
    <location>
        <position position="61"/>
    </location>
</feature>
<feature type="mutagenesis site" description="Temperature-sensitive mutant." evidence="9">
    <original>S</original>
    <variation>P</variation>
    <location>
        <position position="71"/>
    </location>
</feature>
<feature type="mutagenesis site" description="Temperature-sensitive mutant." evidence="9">
    <original>W</original>
    <variation>R</variation>
    <location>
        <position position="97"/>
    </location>
</feature>
<feature type="mutagenesis site" description="Dramatically reduces interaction with RGA1." evidence="9">
    <original>D</original>
    <variation>A</variation>
    <location>
        <position position="118"/>
    </location>
</feature>
<feature type="mutagenesis site" description="In CDC42-1; temperature-sensitive mutant." evidence="9">
    <original>G</original>
    <variation>S</variation>
    <location>
        <position position="142"/>
    </location>
</feature>
<feature type="mutagenesis site" description="Enhances interaction with RGA1." evidence="9">
    <original>C</original>
    <variation>S</variation>
    <location>
        <position position="188"/>
    </location>
</feature>
<feature type="sequence conflict" description="In Ref. 1; CAA36186." evidence="10" ref="1">
    <original>A</original>
    <variation>T</variation>
    <location>
        <position position="189"/>
    </location>
</feature>